<organism evidence="3">
    <name type="scientific">Phoneutria reidyi</name>
    <name type="common">Brazilian Amazonian armed spider</name>
    <name type="synonym">Ctenus reidyi</name>
    <dbReference type="NCBI Taxonomy" id="272752"/>
    <lineage>
        <taxon>Eukaryota</taxon>
        <taxon>Metazoa</taxon>
        <taxon>Ecdysozoa</taxon>
        <taxon>Arthropoda</taxon>
        <taxon>Chelicerata</taxon>
        <taxon>Arachnida</taxon>
        <taxon>Araneae</taxon>
        <taxon>Araneomorphae</taxon>
        <taxon>Entelegynae</taxon>
        <taxon>Lycosoidea</taxon>
        <taxon>Ctenidae</taxon>
        <taxon>Phoneutria</taxon>
    </lineage>
</organism>
<protein>
    <recommendedName>
        <fullName>U1-ctenitoxin-Pr1a</fullName>
        <shortName>U1-CNTX-Pr1a</shortName>
    </recommendedName>
    <alternativeName>
        <fullName>Neurotoxin PRTx18C2</fullName>
    </alternativeName>
</protein>
<name>TX18_PHORI</name>
<proteinExistence type="evidence at protein level"/>
<evidence type="ECO:0000269" key="1">
    <source>
    </source>
</evidence>
<evidence type="ECO:0000269" key="2">
    <source ref="2"/>
</evidence>
<evidence type="ECO:0000305" key="3"/>
<sequence>SCINHGDACDGYKDDCQCCRRNGFCSCSGIFGYKWNCICDVGTTATSYGICMAK</sequence>
<comment type="function">
    <text evidence="2">Omega-agatoxins are antagonists of voltage-gated calcium channels (Cav). Causes rapid general flaccid paralysis followed by death in 10-30 minutes when injected in mice at dose levels of 5 ug per mouse.</text>
</comment>
<comment type="subcellular location">
    <subcellularLocation>
        <location evidence="1 3">Secreted</location>
    </subcellularLocation>
</comment>
<comment type="tissue specificity">
    <text evidence="1 3">Expressed by the venom gland.</text>
</comment>
<comment type="domain">
    <text evidence="3">The presence of a 'disulfide through disulfide knot' structurally defines this protein as a knottin.</text>
</comment>
<comment type="mass spectrometry"/>
<comment type="similarity">
    <text evidence="3">Belongs to the neurotoxin 04 (omega-agtx) family. 03 (type II/III omega-agtx) subfamily.</text>
</comment>
<accession>P83903</accession>
<reference key="1">
    <citation type="journal article" date="2006" name="Comp. Biochem. Physiol.">
        <title>Comparison of the partial proteomes of the venoms of Brazilian spiders of the genus Phoneutria.</title>
        <authorList>
            <person name="Richardson M."/>
            <person name="Pimenta A.M."/>
            <person name="Bemquerer M.P."/>
            <person name="Santoro M.M."/>
            <person name="Beirao P.S."/>
            <person name="Lima M.E."/>
            <person name="Figueiredo S.G."/>
            <person name="Bloch C. Jr."/>
            <person name="Vasconcelos E.A."/>
            <person name="Campos F.A."/>
            <person name="Gomes P.C."/>
            <person name="Cordeiro M.N."/>
        </authorList>
    </citation>
    <scope>PROTEIN SEQUENCE</scope>
    <scope>SUBCELLULAR LOCATION</scope>
    <scope>TISSUE SPECIFICITY</scope>
    <scope>MASS SPECTROMETRY</scope>
    <source>
        <tissue>Venom</tissue>
    </source>
</reference>
<reference evidence="3" key="2">
    <citation type="submission" date="2004-04" db="UniProtKB">
        <title>New neurotoxin PRTx18C2 from venom of Brazilian Amazonian armed spider Phoneutria reidyi.</title>
        <authorList>
            <person name="Richardson M."/>
            <person name="Pimenta A.M.C."/>
            <person name="Bemquerer M.P."/>
            <person name="Santoro M.M."/>
            <person name="Figueiredo S.G."/>
            <person name="Cordeiro M.N."/>
        </authorList>
    </citation>
    <scope>FUNCTION</scope>
</reference>
<feature type="chain" id="PRO_0000087614" description="U1-ctenitoxin-Pr1a">
    <location>
        <begin position="1"/>
        <end position="54" status="greater than"/>
    </location>
</feature>
<feature type="disulfide bond" evidence="3">
    <location>
        <begin position="2"/>
        <end position="19"/>
    </location>
</feature>
<feature type="disulfide bond" evidence="3">
    <location>
        <begin position="9"/>
        <end position="25"/>
    </location>
</feature>
<feature type="disulfide bond" evidence="3">
    <location>
        <begin position="16"/>
        <end position="51"/>
    </location>
</feature>
<feature type="disulfide bond" evidence="3">
    <location>
        <begin position="18"/>
        <end position="39"/>
    </location>
</feature>
<feature type="disulfide bond" evidence="3">
    <location>
        <begin position="27"/>
        <end position="37"/>
    </location>
</feature>
<feature type="non-terminal residue" evidence="3">
    <location>
        <position position="54"/>
    </location>
</feature>
<keyword id="KW-0108">Calcium channel impairing toxin</keyword>
<keyword id="KW-0903">Direct protein sequencing</keyword>
<keyword id="KW-1015">Disulfide bond</keyword>
<keyword id="KW-0872">Ion channel impairing toxin</keyword>
<keyword id="KW-0960">Knottin</keyword>
<keyword id="KW-0528">Neurotoxin</keyword>
<keyword id="KW-0964">Secreted</keyword>
<keyword id="KW-0800">Toxin</keyword>
<keyword id="KW-1218">Voltage-gated calcium channel impairing toxin</keyword>
<dbReference type="ArachnoServer" id="AS000216">
    <property type="toxin name" value="U1-ctenitoxin-Pr1a"/>
</dbReference>
<dbReference type="GO" id="GO:0005576">
    <property type="term" value="C:extracellular region"/>
    <property type="evidence" value="ECO:0007669"/>
    <property type="project" value="UniProtKB-SubCell"/>
</dbReference>
<dbReference type="GO" id="GO:0005246">
    <property type="term" value="F:calcium channel regulator activity"/>
    <property type="evidence" value="ECO:0007669"/>
    <property type="project" value="UniProtKB-KW"/>
</dbReference>
<dbReference type="GO" id="GO:0090729">
    <property type="term" value="F:toxin activity"/>
    <property type="evidence" value="ECO:0007669"/>
    <property type="project" value="UniProtKB-KW"/>
</dbReference>
<dbReference type="InterPro" id="IPR005853">
    <property type="entry name" value="Omega-agatoxin_II/III_CS"/>
</dbReference>
<dbReference type="InterPro" id="IPR013605">
    <property type="entry name" value="Toxin_34"/>
</dbReference>
<dbReference type="Pfam" id="PF08396">
    <property type="entry name" value="Toxin_34"/>
    <property type="match status" value="1"/>
</dbReference>
<dbReference type="PROSITE" id="PS60023">
    <property type="entry name" value="OMEGA_AGA_II_III"/>
    <property type="match status" value="1"/>
</dbReference>